<protein>
    <recommendedName>
        <fullName evidence="1">4-hydroxybenzoate octaprenyltransferase</fullName>
        <ecNumber evidence="1">2.5.1.39</ecNumber>
    </recommendedName>
    <alternativeName>
        <fullName evidence="1">4-HB polyprenyltransferase</fullName>
    </alternativeName>
</protein>
<dbReference type="EC" id="2.5.1.39" evidence="1"/>
<dbReference type="EMBL" id="CP000352">
    <property type="protein sequence ID" value="ABF09812.1"/>
    <property type="molecule type" value="Genomic_DNA"/>
</dbReference>
<dbReference type="RefSeq" id="WP_011517480.1">
    <property type="nucleotide sequence ID" value="NC_007973.1"/>
</dbReference>
<dbReference type="SMR" id="Q1LJ64"/>
<dbReference type="STRING" id="266264.Rmet_2939"/>
<dbReference type="KEGG" id="rme:Rmet_2939"/>
<dbReference type="eggNOG" id="COG0382">
    <property type="taxonomic scope" value="Bacteria"/>
</dbReference>
<dbReference type="HOGENOM" id="CLU_034879_1_0_4"/>
<dbReference type="UniPathway" id="UPA00232"/>
<dbReference type="Proteomes" id="UP000002429">
    <property type="component" value="Chromosome"/>
</dbReference>
<dbReference type="GO" id="GO:0005886">
    <property type="term" value="C:plasma membrane"/>
    <property type="evidence" value="ECO:0007669"/>
    <property type="project" value="UniProtKB-SubCell"/>
</dbReference>
<dbReference type="GO" id="GO:0008412">
    <property type="term" value="F:4-hydroxybenzoate polyprenyltransferase activity"/>
    <property type="evidence" value="ECO:0007669"/>
    <property type="project" value="UniProtKB-UniRule"/>
</dbReference>
<dbReference type="GO" id="GO:0006744">
    <property type="term" value="P:ubiquinone biosynthetic process"/>
    <property type="evidence" value="ECO:0007669"/>
    <property type="project" value="UniProtKB-UniRule"/>
</dbReference>
<dbReference type="CDD" id="cd13959">
    <property type="entry name" value="PT_UbiA_COQ2"/>
    <property type="match status" value="1"/>
</dbReference>
<dbReference type="FunFam" id="1.10.357.140:FF:000008">
    <property type="entry name" value="4-hydroxybenzoate octaprenyltransferase"/>
    <property type="match status" value="1"/>
</dbReference>
<dbReference type="FunFam" id="1.20.120.1780:FF:000001">
    <property type="entry name" value="4-hydroxybenzoate octaprenyltransferase"/>
    <property type="match status" value="1"/>
</dbReference>
<dbReference type="Gene3D" id="1.10.357.140">
    <property type="entry name" value="UbiA prenyltransferase"/>
    <property type="match status" value="1"/>
</dbReference>
<dbReference type="Gene3D" id="1.20.120.1780">
    <property type="entry name" value="UbiA prenyltransferase"/>
    <property type="match status" value="1"/>
</dbReference>
<dbReference type="HAMAP" id="MF_01635">
    <property type="entry name" value="UbiA"/>
    <property type="match status" value="1"/>
</dbReference>
<dbReference type="InterPro" id="IPR006370">
    <property type="entry name" value="HB_polyprenyltransferase-like"/>
</dbReference>
<dbReference type="InterPro" id="IPR039653">
    <property type="entry name" value="Prenyltransferase"/>
</dbReference>
<dbReference type="InterPro" id="IPR000537">
    <property type="entry name" value="UbiA_prenyltransferase"/>
</dbReference>
<dbReference type="InterPro" id="IPR030470">
    <property type="entry name" value="UbiA_prenylTrfase_CS"/>
</dbReference>
<dbReference type="InterPro" id="IPR044878">
    <property type="entry name" value="UbiA_sf"/>
</dbReference>
<dbReference type="NCBIfam" id="TIGR01474">
    <property type="entry name" value="ubiA_proteo"/>
    <property type="match status" value="1"/>
</dbReference>
<dbReference type="PANTHER" id="PTHR11048:SF28">
    <property type="entry name" value="4-HYDROXYBENZOATE POLYPRENYLTRANSFERASE, MITOCHONDRIAL"/>
    <property type="match status" value="1"/>
</dbReference>
<dbReference type="PANTHER" id="PTHR11048">
    <property type="entry name" value="PRENYLTRANSFERASES"/>
    <property type="match status" value="1"/>
</dbReference>
<dbReference type="Pfam" id="PF01040">
    <property type="entry name" value="UbiA"/>
    <property type="match status" value="1"/>
</dbReference>
<dbReference type="PROSITE" id="PS00943">
    <property type="entry name" value="UBIA"/>
    <property type="match status" value="1"/>
</dbReference>
<gene>
    <name evidence="1" type="primary">ubiA</name>
    <name type="ordered locus">Rmet_2939</name>
</gene>
<reference key="1">
    <citation type="journal article" date="2010" name="PLoS ONE">
        <title>The complete genome sequence of Cupriavidus metallidurans strain CH34, a master survivalist in harsh and anthropogenic environments.</title>
        <authorList>
            <person name="Janssen P.J."/>
            <person name="Van Houdt R."/>
            <person name="Moors H."/>
            <person name="Monsieurs P."/>
            <person name="Morin N."/>
            <person name="Michaux A."/>
            <person name="Benotmane M.A."/>
            <person name="Leys N."/>
            <person name="Vallaeys T."/>
            <person name="Lapidus A."/>
            <person name="Monchy S."/>
            <person name="Medigue C."/>
            <person name="Taghavi S."/>
            <person name="McCorkle S."/>
            <person name="Dunn J."/>
            <person name="van der Lelie D."/>
            <person name="Mergeay M."/>
        </authorList>
    </citation>
    <scope>NUCLEOTIDE SEQUENCE [LARGE SCALE GENOMIC DNA]</scope>
    <source>
        <strain>ATCC 43123 / DSM 2839 / NBRC 102507 / CH34</strain>
    </source>
</reference>
<evidence type="ECO:0000255" key="1">
    <source>
        <dbReference type="HAMAP-Rule" id="MF_01635"/>
    </source>
</evidence>
<feature type="chain" id="PRO_0000262829" description="4-hydroxybenzoate octaprenyltransferase">
    <location>
        <begin position="1"/>
        <end position="294"/>
    </location>
</feature>
<feature type="transmembrane region" description="Helical" evidence="1">
    <location>
        <begin position="37"/>
        <end position="57"/>
    </location>
</feature>
<feature type="transmembrane region" description="Helical" evidence="1">
    <location>
        <begin position="101"/>
        <end position="121"/>
    </location>
</feature>
<feature type="transmembrane region" description="Helical" evidence="1">
    <location>
        <begin position="142"/>
        <end position="162"/>
    </location>
</feature>
<feature type="transmembrane region" description="Helical" evidence="1">
    <location>
        <begin position="169"/>
        <end position="189"/>
    </location>
</feature>
<feature type="transmembrane region" description="Helical" evidence="1">
    <location>
        <begin position="219"/>
        <end position="239"/>
    </location>
</feature>
<feature type="transmembrane region" description="Helical" evidence="1">
    <location>
        <begin position="241"/>
        <end position="261"/>
    </location>
</feature>
<feature type="transmembrane region" description="Helical" evidence="1">
    <location>
        <begin position="271"/>
        <end position="293"/>
    </location>
</feature>
<comment type="function">
    <text evidence="1">Catalyzes the prenylation of para-hydroxybenzoate (PHB) with an all-trans polyprenyl group. Mediates the second step in the final reaction sequence of ubiquinone-8 (UQ-8) biosynthesis, which is the condensation of the polyisoprenoid side chain with PHB, generating the first membrane-bound Q intermediate 3-octaprenyl-4-hydroxybenzoate.</text>
</comment>
<comment type="catalytic activity">
    <reaction evidence="1">
        <text>all-trans-octaprenyl diphosphate + 4-hydroxybenzoate = 4-hydroxy-3-(all-trans-octaprenyl)benzoate + diphosphate</text>
        <dbReference type="Rhea" id="RHEA:27782"/>
        <dbReference type="ChEBI" id="CHEBI:1617"/>
        <dbReference type="ChEBI" id="CHEBI:17879"/>
        <dbReference type="ChEBI" id="CHEBI:33019"/>
        <dbReference type="ChEBI" id="CHEBI:57711"/>
        <dbReference type="EC" id="2.5.1.39"/>
    </reaction>
</comment>
<comment type="cofactor">
    <cofactor evidence="1">
        <name>Mg(2+)</name>
        <dbReference type="ChEBI" id="CHEBI:18420"/>
    </cofactor>
</comment>
<comment type="pathway">
    <text evidence="1">Cofactor biosynthesis; ubiquinone biosynthesis.</text>
</comment>
<comment type="subcellular location">
    <subcellularLocation>
        <location evidence="1">Cell inner membrane</location>
        <topology evidence="1">Multi-pass membrane protein</topology>
    </subcellularLocation>
</comment>
<comment type="similarity">
    <text evidence="1">Belongs to the UbiA prenyltransferase family.</text>
</comment>
<proteinExistence type="inferred from homology"/>
<keyword id="KW-0997">Cell inner membrane</keyword>
<keyword id="KW-1003">Cell membrane</keyword>
<keyword id="KW-0460">Magnesium</keyword>
<keyword id="KW-0472">Membrane</keyword>
<keyword id="KW-1185">Reference proteome</keyword>
<keyword id="KW-0808">Transferase</keyword>
<keyword id="KW-0812">Transmembrane</keyword>
<keyword id="KW-1133">Transmembrane helix</keyword>
<keyword id="KW-0831">Ubiquinone biosynthesis</keyword>
<sequence>MSHPSTAPAHPSRLALYARLVRIDKPIGTLLLLWPTLWAMWMAAGGPPGWTLFWIFFAGTFLMRSAGCAMNDWADRDFDKHVKRTKERPLTAGLIASWEALAVAAVLALIALALILPLNALTKWLAVVAAVLAGTYPFFKRFFAIPQAYLGIAFGFGIPMAFAAIQDQVPFVAWLMLLANVFWAIAYDTAYAMVDRDDDLLLGMKTSAITFGRFDVAAIMICYAVFLGLMAWAGSLLGLGWPYYAGLVAAAGMAGYHYTLIRERDRMKCFAAFRHNNWLGACVFAGTFVAYLLK</sequence>
<organism>
    <name type="scientific">Cupriavidus metallidurans (strain ATCC 43123 / DSM 2839 / NBRC 102507 / CH34)</name>
    <name type="common">Ralstonia metallidurans</name>
    <dbReference type="NCBI Taxonomy" id="266264"/>
    <lineage>
        <taxon>Bacteria</taxon>
        <taxon>Pseudomonadati</taxon>
        <taxon>Pseudomonadota</taxon>
        <taxon>Betaproteobacteria</taxon>
        <taxon>Burkholderiales</taxon>
        <taxon>Burkholderiaceae</taxon>
        <taxon>Cupriavidus</taxon>
    </lineage>
</organism>
<accession>Q1LJ64</accession>
<name>UBIA_CUPMC</name>